<feature type="chain" id="PRO_0000196028" description="Small ribosomal subunit protein bS1">
    <location>
        <begin position="1"/>
        <end position="559"/>
    </location>
</feature>
<feature type="domain" description="S1 motif 1" evidence="2">
    <location>
        <begin position="21"/>
        <end position="87"/>
    </location>
</feature>
<feature type="domain" description="S1 motif 2" evidence="2">
    <location>
        <begin position="105"/>
        <end position="171"/>
    </location>
</feature>
<feature type="domain" description="S1 motif 3" evidence="2">
    <location>
        <begin position="192"/>
        <end position="260"/>
    </location>
</feature>
<feature type="domain" description="S1 motif 4" evidence="2">
    <location>
        <begin position="277"/>
        <end position="347"/>
    </location>
</feature>
<feature type="domain" description="S1 motif 5" evidence="2">
    <location>
        <begin position="364"/>
        <end position="434"/>
    </location>
</feature>
<feature type="domain" description="S1 motif 6" evidence="2">
    <location>
        <begin position="451"/>
        <end position="520"/>
    </location>
</feature>
<gene>
    <name type="primary">rpsA</name>
    <name type="ordered locus">BUsg_299</name>
</gene>
<sequence length="559" mass="62529">MNESFAQLFEESLKEIKTRPGSIIRGTIVSIEKDIVLVDAGLKSESAIPVEQFKNAQGLLDVKVGDQIDVALDAIEDGFGETLLSREKAKRHEAWLILEQAHEKSETVIGIINGKVKGGFTVELNEIRAFLPGSLVDVRPVRDTIHLEGKELEFKVIKLDQKRNNVVVSRRAVIESENSAERDQLLESLQEGIEIKGIVKNLTDYGAFVDLGGVDGLLHITDMAWKRVKHPSEIVNVGDEINVKILKFDKERTRVSLGLKQLGEDPWIAISNRYPEGIKLSGRVTNLTDYGCFVEIEEGVEGLVHVSEMDWTNKNIHPSKVVAVNNIVDVIVLDIDEERRRISLGLKQCKINPWQEFSETHKKGIHVSGKIKSITDFGIFIGLKGGIDGLVHLSDISWKISGEEAVKNYKKGDEISAVVLQVDAERERISLGIKQLEEDPFNVYVSNHKKGAIITGIIKDFDKKTVTVKLSDGVEGNIKFSDSSRVNSEEIIKKLKIDDTILVKISNFDRKNRIINLTFHILDENNNKKDLKNKINVKSNDESFSNVMAEAFKAAQNTE</sequence>
<protein>
    <recommendedName>
        <fullName evidence="3">Small ribosomal subunit protein bS1</fullName>
    </recommendedName>
    <alternativeName>
        <fullName>30S ribosomal protein S1</fullName>
    </alternativeName>
</protein>
<proteinExistence type="inferred from homology"/>
<comment type="function">
    <text evidence="1">Binds mRNA; thus facilitating recognition of the initiation point. It is needed to translate mRNA with a short Shine-Dalgarno (SD) purine-rich sequence (By similarity).</text>
</comment>
<comment type="similarity">
    <text evidence="3">Belongs to the bacterial ribosomal protein bS1 family.</text>
</comment>
<accession>Q44653</accession>
<organism>
    <name type="scientific">Buchnera aphidicola subsp. Schizaphis graminum (strain Sg)</name>
    <dbReference type="NCBI Taxonomy" id="198804"/>
    <lineage>
        <taxon>Bacteria</taxon>
        <taxon>Pseudomonadati</taxon>
        <taxon>Pseudomonadota</taxon>
        <taxon>Gammaproteobacteria</taxon>
        <taxon>Enterobacterales</taxon>
        <taxon>Erwiniaceae</taxon>
        <taxon>Buchnera</taxon>
    </lineage>
</organism>
<evidence type="ECO:0000250" key="1"/>
<evidence type="ECO:0000255" key="2">
    <source>
        <dbReference type="PROSITE-ProRule" id="PRU00180"/>
    </source>
</evidence>
<evidence type="ECO:0000305" key="3"/>
<reference key="1">
    <citation type="journal article" date="1997" name="Curr. Microbiol.">
        <title>Nucleotide sequence of a DNA fragment from Buchnera aphidicola (Aphid endosymbiont) containing the genes aspS-trxB-serS-serC-aroA-rpsA-himD-tpiA.</title>
        <authorList>
            <person name="Thao M.L."/>
            <person name="Baumann P."/>
        </authorList>
    </citation>
    <scope>NUCLEOTIDE SEQUENCE [GENOMIC DNA]</scope>
</reference>
<reference key="2">
    <citation type="journal article" date="2002" name="Science">
        <title>50 million years of genomic stasis in endosymbiotic bacteria.</title>
        <authorList>
            <person name="Tamas I."/>
            <person name="Klasson L."/>
            <person name="Canbaeck B."/>
            <person name="Naeslund A.K."/>
            <person name="Eriksson A.-S."/>
            <person name="Wernegreen J.J."/>
            <person name="Sandstroem J.P."/>
            <person name="Moran N.A."/>
            <person name="Andersson S.G.E."/>
        </authorList>
    </citation>
    <scope>NUCLEOTIDE SEQUENCE [LARGE SCALE GENOMIC DNA]</scope>
    <source>
        <strain>Sg</strain>
    </source>
</reference>
<keyword id="KW-0677">Repeat</keyword>
<keyword id="KW-0687">Ribonucleoprotein</keyword>
<keyword id="KW-0689">Ribosomal protein</keyword>
<keyword id="KW-0694">RNA-binding</keyword>
<name>RS1_BUCAP</name>
<dbReference type="EMBL" id="L43549">
    <property type="protein sequence ID" value="AAC05429.1"/>
    <property type="molecule type" value="Genomic_DNA"/>
</dbReference>
<dbReference type="EMBL" id="AE013218">
    <property type="protein sequence ID" value="AAM67854.1"/>
    <property type="molecule type" value="Genomic_DNA"/>
</dbReference>
<dbReference type="RefSeq" id="WP_011053821.1">
    <property type="nucleotide sequence ID" value="NC_004061.1"/>
</dbReference>
<dbReference type="SMR" id="Q44653"/>
<dbReference type="STRING" id="198804.BUsg_299"/>
<dbReference type="GeneID" id="93003769"/>
<dbReference type="KEGG" id="bas:BUsg_299"/>
<dbReference type="eggNOG" id="COG0539">
    <property type="taxonomic scope" value="Bacteria"/>
</dbReference>
<dbReference type="HOGENOM" id="CLU_015805_2_1_6"/>
<dbReference type="Proteomes" id="UP000000416">
    <property type="component" value="Chromosome"/>
</dbReference>
<dbReference type="GO" id="GO:0022627">
    <property type="term" value="C:cytosolic small ribosomal subunit"/>
    <property type="evidence" value="ECO:0007669"/>
    <property type="project" value="TreeGrafter"/>
</dbReference>
<dbReference type="GO" id="GO:0003729">
    <property type="term" value="F:mRNA binding"/>
    <property type="evidence" value="ECO:0007669"/>
    <property type="project" value="TreeGrafter"/>
</dbReference>
<dbReference type="GO" id="GO:0003735">
    <property type="term" value="F:structural constituent of ribosome"/>
    <property type="evidence" value="ECO:0007669"/>
    <property type="project" value="InterPro"/>
</dbReference>
<dbReference type="GO" id="GO:0006412">
    <property type="term" value="P:translation"/>
    <property type="evidence" value="ECO:0007669"/>
    <property type="project" value="InterPro"/>
</dbReference>
<dbReference type="CDD" id="cd05687">
    <property type="entry name" value="S1_RPS1_repeat_ec1_hs1"/>
    <property type="match status" value="1"/>
</dbReference>
<dbReference type="CDD" id="cd04465">
    <property type="entry name" value="S1_RPS1_repeat_ec2_hs2"/>
    <property type="match status" value="1"/>
</dbReference>
<dbReference type="CDD" id="cd05688">
    <property type="entry name" value="S1_RPS1_repeat_ec3"/>
    <property type="match status" value="1"/>
</dbReference>
<dbReference type="CDD" id="cd05689">
    <property type="entry name" value="S1_RPS1_repeat_ec4"/>
    <property type="match status" value="1"/>
</dbReference>
<dbReference type="FunFam" id="2.40.50.140:FF:000011">
    <property type="entry name" value="30S ribosomal protein S1"/>
    <property type="match status" value="1"/>
</dbReference>
<dbReference type="FunFam" id="2.40.50.140:FF:000016">
    <property type="entry name" value="30S ribosomal protein S1"/>
    <property type="match status" value="1"/>
</dbReference>
<dbReference type="FunFam" id="2.40.50.140:FF:000017">
    <property type="entry name" value="30S ribosomal protein S1"/>
    <property type="match status" value="1"/>
</dbReference>
<dbReference type="FunFam" id="2.40.50.140:FF:000018">
    <property type="entry name" value="30S ribosomal protein S1"/>
    <property type="match status" value="1"/>
</dbReference>
<dbReference type="FunFam" id="2.40.50.140:FF:000021">
    <property type="entry name" value="30S ribosomal protein S1"/>
    <property type="match status" value="1"/>
</dbReference>
<dbReference type="Gene3D" id="2.40.50.140">
    <property type="entry name" value="Nucleic acid-binding proteins"/>
    <property type="match status" value="6"/>
</dbReference>
<dbReference type="InterPro" id="IPR012340">
    <property type="entry name" value="NA-bd_OB-fold"/>
</dbReference>
<dbReference type="InterPro" id="IPR050437">
    <property type="entry name" value="Ribos_protein_bS1-like"/>
</dbReference>
<dbReference type="InterPro" id="IPR000110">
    <property type="entry name" value="Ribosomal_bS1"/>
</dbReference>
<dbReference type="InterPro" id="IPR035104">
    <property type="entry name" value="Ribosomal_protein_S1-like"/>
</dbReference>
<dbReference type="InterPro" id="IPR003029">
    <property type="entry name" value="S1_domain"/>
</dbReference>
<dbReference type="NCBIfam" id="NF004951">
    <property type="entry name" value="PRK06299.1-1"/>
    <property type="match status" value="1"/>
</dbReference>
<dbReference type="NCBIfam" id="NF004952">
    <property type="entry name" value="PRK06299.1-2"/>
    <property type="match status" value="1"/>
</dbReference>
<dbReference type="NCBIfam" id="NF004954">
    <property type="entry name" value="PRK06299.1-4"/>
    <property type="match status" value="1"/>
</dbReference>
<dbReference type="NCBIfam" id="TIGR00717">
    <property type="entry name" value="rpsA"/>
    <property type="match status" value="1"/>
</dbReference>
<dbReference type="PANTHER" id="PTHR10724">
    <property type="entry name" value="30S RIBOSOMAL PROTEIN S1"/>
    <property type="match status" value="1"/>
</dbReference>
<dbReference type="PANTHER" id="PTHR10724:SF7">
    <property type="entry name" value="SMALL RIBOSOMAL SUBUNIT PROTEIN BS1C"/>
    <property type="match status" value="1"/>
</dbReference>
<dbReference type="Pfam" id="PF00575">
    <property type="entry name" value="S1"/>
    <property type="match status" value="5"/>
</dbReference>
<dbReference type="PIRSF" id="PIRSF002111">
    <property type="entry name" value="RpsA"/>
    <property type="match status" value="1"/>
</dbReference>
<dbReference type="PRINTS" id="PR00681">
    <property type="entry name" value="RIBOSOMALS1"/>
</dbReference>
<dbReference type="SMART" id="SM00316">
    <property type="entry name" value="S1"/>
    <property type="match status" value="6"/>
</dbReference>
<dbReference type="SUPFAM" id="SSF50249">
    <property type="entry name" value="Nucleic acid-binding proteins"/>
    <property type="match status" value="6"/>
</dbReference>
<dbReference type="PROSITE" id="PS50126">
    <property type="entry name" value="S1"/>
    <property type="match status" value="6"/>
</dbReference>